<accession>B5RF85</accession>
<reference key="1">
    <citation type="journal article" date="2008" name="Genome Res.">
        <title>Comparative genome analysis of Salmonella enteritidis PT4 and Salmonella gallinarum 287/91 provides insights into evolutionary and host adaptation pathways.</title>
        <authorList>
            <person name="Thomson N.R."/>
            <person name="Clayton D.J."/>
            <person name="Windhorst D."/>
            <person name="Vernikos G."/>
            <person name="Davidson S."/>
            <person name="Churcher C."/>
            <person name="Quail M.A."/>
            <person name="Stevens M."/>
            <person name="Jones M.A."/>
            <person name="Watson M."/>
            <person name="Barron A."/>
            <person name="Layton A."/>
            <person name="Pickard D."/>
            <person name="Kingsley R.A."/>
            <person name="Bignell A."/>
            <person name="Clark L."/>
            <person name="Harris B."/>
            <person name="Ormond D."/>
            <person name="Abdellah Z."/>
            <person name="Brooks K."/>
            <person name="Cherevach I."/>
            <person name="Chillingworth T."/>
            <person name="Woodward J."/>
            <person name="Norberczak H."/>
            <person name="Lord A."/>
            <person name="Arrowsmith C."/>
            <person name="Jagels K."/>
            <person name="Moule S."/>
            <person name="Mungall K."/>
            <person name="Saunders M."/>
            <person name="Whitehead S."/>
            <person name="Chabalgoity J.A."/>
            <person name="Maskell D."/>
            <person name="Humphreys T."/>
            <person name="Roberts M."/>
            <person name="Barrow P.A."/>
            <person name="Dougan G."/>
            <person name="Parkhill J."/>
        </authorList>
    </citation>
    <scope>NUCLEOTIDE SEQUENCE [LARGE SCALE GENOMIC DNA]</scope>
    <source>
        <strain>287/91 / NCTC 13346</strain>
    </source>
</reference>
<evidence type="ECO:0000255" key="1">
    <source>
        <dbReference type="HAMAP-Rule" id="MF_00186"/>
    </source>
</evidence>
<dbReference type="EC" id="2.7.1.30" evidence="1"/>
<dbReference type="EMBL" id="AM933173">
    <property type="protein sequence ID" value="CAR39128.1"/>
    <property type="molecule type" value="Genomic_DNA"/>
</dbReference>
<dbReference type="RefSeq" id="WP_000136809.1">
    <property type="nucleotide sequence ID" value="NC_011274.1"/>
</dbReference>
<dbReference type="SMR" id="B5RF85"/>
<dbReference type="KEGG" id="seg:SG3334"/>
<dbReference type="HOGENOM" id="CLU_009281_2_3_6"/>
<dbReference type="UniPathway" id="UPA00618">
    <property type="reaction ID" value="UER00672"/>
</dbReference>
<dbReference type="Proteomes" id="UP000008321">
    <property type="component" value="Chromosome"/>
</dbReference>
<dbReference type="GO" id="GO:0005829">
    <property type="term" value="C:cytosol"/>
    <property type="evidence" value="ECO:0007669"/>
    <property type="project" value="TreeGrafter"/>
</dbReference>
<dbReference type="GO" id="GO:0005524">
    <property type="term" value="F:ATP binding"/>
    <property type="evidence" value="ECO:0007669"/>
    <property type="project" value="UniProtKB-UniRule"/>
</dbReference>
<dbReference type="GO" id="GO:0004370">
    <property type="term" value="F:glycerol kinase activity"/>
    <property type="evidence" value="ECO:0000250"/>
    <property type="project" value="UniProtKB"/>
</dbReference>
<dbReference type="GO" id="GO:0046872">
    <property type="term" value="F:metal ion binding"/>
    <property type="evidence" value="ECO:0007669"/>
    <property type="project" value="UniProtKB-KW"/>
</dbReference>
<dbReference type="GO" id="GO:0019563">
    <property type="term" value="P:glycerol catabolic process"/>
    <property type="evidence" value="ECO:0007669"/>
    <property type="project" value="UniProtKB-UniRule"/>
</dbReference>
<dbReference type="GO" id="GO:0006071">
    <property type="term" value="P:glycerol metabolic process"/>
    <property type="evidence" value="ECO:0000250"/>
    <property type="project" value="UniProtKB"/>
</dbReference>
<dbReference type="GO" id="GO:0006072">
    <property type="term" value="P:glycerol-3-phosphate metabolic process"/>
    <property type="evidence" value="ECO:0007669"/>
    <property type="project" value="InterPro"/>
</dbReference>
<dbReference type="CDD" id="cd07786">
    <property type="entry name" value="FGGY_EcGK_like"/>
    <property type="match status" value="1"/>
</dbReference>
<dbReference type="FunFam" id="3.30.420.40:FF:000007">
    <property type="entry name" value="Glycerol kinase"/>
    <property type="match status" value="1"/>
</dbReference>
<dbReference type="FunFam" id="3.30.420.40:FF:000008">
    <property type="entry name" value="Glycerol kinase"/>
    <property type="match status" value="1"/>
</dbReference>
<dbReference type="Gene3D" id="3.30.420.40">
    <property type="match status" value="2"/>
</dbReference>
<dbReference type="HAMAP" id="MF_00186">
    <property type="entry name" value="Glycerol_kin"/>
    <property type="match status" value="1"/>
</dbReference>
<dbReference type="InterPro" id="IPR043129">
    <property type="entry name" value="ATPase_NBD"/>
</dbReference>
<dbReference type="InterPro" id="IPR000577">
    <property type="entry name" value="Carb_kinase_FGGY"/>
</dbReference>
<dbReference type="InterPro" id="IPR018483">
    <property type="entry name" value="Carb_kinase_FGGY_CS"/>
</dbReference>
<dbReference type="InterPro" id="IPR018485">
    <property type="entry name" value="FGGY_C"/>
</dbReference>
<dbReference type="InterPro" id="IPR018484">
    <property type="entry name" value="FGGY_N"/>
</dbReference>
<dbReference type="InterPro" id="IPR005999">
    <property type="entry name" value="Glycerol_kin"/>
</dbReference>
<dbReference type="NCBIfam" id="TIGR01311">
    <property type="entry name" value="glycerol_kin"/>
    <property type="match status" value="1"/>
</dbReference>
<dbReference type="NCBIfam" id="NF000756">
    <property type="entry name" value="PRK00047.1"/>
    <property type="match status" value="1"/>
</dbReference>
<dbReference type="PANTHER" id="PTHR10196:SF69">
    <property type="entry name" value="GLYCEROL KINASE"/>
    <property type="match status" value="1"/>
</dbReference>
<dbReference type="PANTHER" id="PTHR10196">
    <property type="entry name" value="SUGAR KINASE"/>
    <property type="match status" value="1"/>
</dbReference>
<dbReference type="Pfam" id="PF02782">
    <property type="entry name" value="FGGY_C"/>
    <property type="match status" value="1"/>
</dbReference>
<dbReference type="Pfam" id="PF00370">
    <property type="entry name" value="FGGY_N"/>
    <property type="match status" value="1"/>
</dbReference>
<dbReference type="PIRSF" id="PIRSF000538">
    <property type="entry name" value="GlpK"/>
    <property type="match status" value="1"/>
</dbReference>
<dbReference type="SUPFAM" id="SSF53067">
    <property type="entry name" value="Actin-like ATPase domain"/>
    <property type="match status" value="2"/>
</dbReference>
<dbReference type="PROSITE" id="PS00933">
    <property type="entry name" value="FGGY_KINASES_1"/>
    <property type="match status" value="1"/>
</dbReference>
<dbReference type="PROSITE" id="PS00445">
    <property type="entry name" value="FGGY_KINASES_2"/>
    <property type="match status" value="1"/>
</dbReference>
<name>GLPK_SALG2</name>
<proteinExistence type="inferred from homology"/>
<feature type="chain" id="PRO_1000098757" description="Glycerol kinase">
    <location>
        <begin position="1"/>
        <end position="502"/>
    </location>
</feature>
<feature type="binding site" evidence="1">
    <location>
        <position position="14"/>
    </location>
    <ligand>
        <name>ADP</name>
        <dbReference type="ChEBI" id="CHEBI:456216"/>
    </ligand>
</feature>
<feature type="binding site" evidence="1">
    <location>
        <position position="14"/>
    </location>
    <ligand>
        <name>ATP</name>
        <dbReference type="ChEBI" id="CHEBI:30616"/>
    </ligand>
</feature>
<feature type="binding site" evidence="1">
    <location>
        <position position="14"/>
    </location>
    <ligand>
        <name>sn-glycerol 3-phosphate</name>
        <dbReference type="ChEBI" id="CHEBI:57597"/>
    </ligand>
</feature>
<feature type="binding site" evidence="1">
    <location>
        <position position="15"/>
    </location>
    <ligand>
        <name>ATP</name>
        <dbReference type="ChEBI" id="CHEBI:30616"/>
    </ligand>
</feature>
<feature type="binding site" evidence="1">
    <location>
        <position position="16"/>
    </location>
    <ligand>
        <name>ATP</name>
        <dbReference type="ChEBI" id="CHEBI:30616"/>
    </ligand>
</feature>
<feature type="binding site" evidence="1">
    <location>
        <position position="18"/>
    </location>
    <ligand>
        <name>ADP</name>
        <dbReference type="ChEBI" id="CHEBI:456216"/>
    </ligand>
</feature>
<feature type="binding site" evidence="1">
    <location>
        <position position="84"/>
    </location>
    <ligand>
        <name>glycerol</name>
        <dbReference type="ChEBI" id="CHEBI:17754"/>
    </ligand>
</feature>
<feature type="binding site" evidence="1">
    <location>
        <position position="84"/>
    </location>
    <ligand>
        <name>sn-glycerol 3-phosphate</name>
        <dbReference type="ChEBI" id="CHEBI:57597"/>
    </ligand>
</feature>
<feature type="binding site" evidence="1">
    <location>
        <position position="85"/>
    </location>
    <ligand>
        <name>glycerol</name>
        <dbReference type="ChEBI" id="CHEBI:17754"/>
    </ligand>
</feature>
<feature type="binding site" evidence="1">
    <location>
        <position position="85"/>
    </location>
    <ligand>
        <name>sn-glycerol 3-phosphate</name>
        <dbReference type="ChEBI" id="CHEBI:57597"/>
    </ligand>
</feature>
<feature type="binding site" evidence="1">
    <location>
        <position position="136"/>
    </location>
    <ligand>
        <name>glycerol</name>
        <dbReference type="ChEBI" id="CHEBI:17754"/>
    </ligand>
</feature>
<feature type="binding site" evidence="1">
    <location>
        <position position="136"/>
    </location>
    <ligand>
        <name>sn-glycerol 3-phosphate</name>
        <dbReference type="ChEBI" id="CHEBI:57597"/>
    </ligand>
</feature>
<feature type="binding site" evidence="1">
    <location>
        <position position="246"/>
    </location>
    <ligand>
        <name>glycerol</name>
        <dbReference type="ChEBI" id="CHEBI:17754"/>
    </ligand>
</feature>
<feature type="binding site" evidence="1">
    <location>
        <position position="246"/>
    </location>
    <ligand>
        <name>sn-glycerol 3-phosphate</name>
        <dbReference type="ChEBI" id="CHEBI:57597"/>
    </ligand>
</feature>
<feature type="binding site" evidence="1">
    <location>
        <position position="247"/>
    </location>
    <ligand>
        <name>glycerol</name>
        <dbReference type="ChEBI" id="CHEBI:17754"/>
    </ligand>
</feature>
<feature type="binding site" evidence="1">
    <location>
        <position position="268"/>
    </location>
    <ligand>
        <name>ADP</name>
        <dbReference type="ChEBI" id="CHEBI:456216"/>
    </ligand>
</feature>
<feature type="binding site" evidence="1">
    <location>
        <position position="268"/>
    </location>
    <ligand>
        <name>ATP</name>
        <dbReference type="ChEBI" id="CHEBI:30616"/>
    </ligand>
</feature>
<feature type="binding site" evidence="1">
    <location>
        <position position="311"/>
    </location>
    <ligand>
        <name>ADP</name>
        <dbReference type="ChEBI" id="CHEBI:456216"/>
    </ligand>
</feature>
<feature type="binding site" evidence="1">
    <location>
        <position position="311"/>
    </location>
    <ligand>
        <name>ATP</name>
        <dbReference type="ChEBI" id="CHEBI:30616"/>
    </ligand>
</feature>
<feature type="binding site" evidence="1">
    <location>
        <position position="315"/>
    </location>
    <ligand>
        <name>ATP</name>
        <dbReference type="ChEBI" id="CHEBI:30616"/>
    </ligand>
</feature>
<feature type="binding site" evidence="1">
    <location>
        <position position="412"/>
    </location>
    <ligand>
        <name>ADP</name>
        <dbReference type="ChEBI" id="CHEBI:456216"/>
    </ligand>
</feature>
<feature type="binding site" evidence="1">
    <location>
        <position position="412"/>
    </location>
    <ligand>
        <name>ATP</name>
        <dbReference type="ChEBI" id="CHEBI:30616"/>
    </ligand>
</feature>
<feature type="binding site" evidence="1">
    <location>
        <position position="416"/>
    </location>
    <ligand>
        <name>ADP</name>
        <dbReference type="ChEBI" id="CHEBI:456216"/>
    </ligand>
</feature>
<keyword id="KW-0021">Allosteric enzyme</keyword>
<keyword id="KW-0067">ATP-binding</keyword>
<keyword id="KW-0319">Glycerol metabolism</keyword>
<keyword id="KW-0418">Kinase</keyword>
<keyword id="KW-0479">Metal-binding</keyword>
<keyword id="KW-0547">Nucleotide-binding</keyword>
<keyword id="KW-0808">Transferase</keyword>
<keyword id="KW-0862">Zinc</keyword>
<sequence>MTEKKYIVALDQGTTSSRAVVMDHDANIVSVSQREFEQIYPKPGWVEHDPMEIWASQSSTLVEVLAKADISSDQIAAIGITNQRETAIVWERETGKPIYNAIVWQCRRTADICEQLKRDGLEDYIRDNTGLVVDPYFSGTKVKWILDHVEGSRERAKRGELLFGTVDTWLIWKMTQGRVHVTDYTNASRTMLFNIHDLDWDDKMLDVLDIPRAMLPQVRKSSEVYGQTNIGGKGGTRIPIAGIAGDQQAALFGQLCVKEGMAKNTYGTGCFMLMNTGEKAVKSENGLLTTIACGPSGEVNYALEGAVFMAGASIQWLRDEMKLISDAFDSEYFATKVKDTNGVYVVPAFTGLGAPYWDPYARGAIFGLTRGVNSNHIIRATLESIAYQTRDVLEAMQADSGIRLHALRVDGGAVANNFLMQFQSDILGTRVERPEVREVTALGAAYLAGLAVGYWQNLDELQEKAVIEREFRPGIETTERNYRYSGWKKAVKRAMAWEEHDK</sequence>
<protein>
    <recommendedName>
        <fullName evidence="1">Glycerol kinase</fullName>
        <ecNumber evidence="1">2.7.1.30</ecNumber>
    </recommendedName>
    <alternativeName>
        <fullName evidence="1">ATP:glycerol 3-phosphotransferase</fullName>
    </alternativeName>
    <alternativeName>
        <fullName evidence="1">Glycerokinase</fullName>
        <shortName evidence="1">GK</shortName>
    </alternativeName>
</protein>
<organism>
    <name type="scientific">Salmonella gallinarum (strain 287/91 / NCTC 13346)</name>
    <dbReference type="NCBI Taxonomy" id="550538"/>
    <lineage>
        <taxon>Bacteria</taxon>
        <taxon>Pseudomonadati</taxon>
        <taxon>Pseudomonadota</taxon>
        <taxon>Gammaproteobacteria</taxon>
        <taxon>Enterobacterales</taxon>
        <taxon>Enterobacteriaceae</taxon>
        <taxon>Salmonella</taxon>
    </lineage>
</organism>
<gene>
    <name evidence="1" type="primary">glpK</name>
    <name type="ordered locus">SG3334</name>
</gene>
<comment type="function">
    <text evidence="1">Key enzyme in the regulation of glycerol uptake and metabolism. Catalyzes the phosphorylation of glycerol to yield sn-glycerol 3-phosphate.</text>
</comment>
<comment type="catalytic activity">
    <reaction evidence="1">
        <text>glycerol + ATP = sn-glycerol 3-phosphate + ADP + H(+)</text>
        <dbReference type="Rhea" id="RHEA:21644"/>
        <dbReference type="ChEBI" id="CHEBI:15378"/>
        <dbReference type="ChEBI" id="CHEBI:17754"/>
        <dbReference type="ChEBI" id="CHEBI:30616"/>
        <dbReference type="ChEBI" id="CHEBI:57597"/>
        <dbReference type="ChEBI" id="CHEBI:456216"/>
        <dbReference type="EC" id="2.7.1.30"/>
    </reaction>
</comment>
<comment type="activity regulation">
    <text evidence="1">Activity of this regulatory enzyme is affected by several metabolites. Allosterically and non-competitively inhibited by fructose 1,6-bisphosphate (FBP) and unphosphorylated phosphocarrier protein EIIA-Glc (III-Glc), an integral component of the bacterial phosphotransferase (PTS) system.</text>
</comment>
<comment type="pathway">
    <text evidence="1">Polyol metabolism; glycerol degradation via glycerol kinase pathway; sn-glycerol 3-phosphate from glycerol: step 1/1.</text>
</comment>
<comment type="subunit">
    <text evidence="1">Homotetramer and homodimer (in equilibrium). Heterodimer with EIIA-Glc. Binds 1 zinc ion per glycerol kinase EIIA-Glc dimer. The zinc ion is important for dimerization.</text>
</comment>
<comment type="similarity">
    <text evidence="1">Belongs to the FGGY kinase family.</text>
</comment>